<feature type="chain" id="PRO_1000128715" description="Large ribosomal subunit protein bL27">
    <location>
        <begin position="1"/>
        <end position="84"/>
    </location>
</feature>
<feature type="region of interest" description="Disordered" evidence="2">
    <location>
        <begin position="1"/>
        <end position="29"/>
    </location>
</feature>
<comment type="similarity">
    <text evidence="1">Belongs to the bacterial ribosomal protein bL27 family.</text>
</comment>
<dbReference type="EMBL" id="CP001101">
    <property type="protein sequence ID" value="ACE03784.1"/>
    <property type="molecule type" value="Genomic_DNA"/>
</dbReference>
<dbReference type="SMR" id="B3EP07"/>
<dbReference type="STRING" id="331678.Cphamn1_0833"/>
<dbReference type="KEGG" id="cpb:Cphamn1_0833"/>
<dbReference type="eggNOG" id="COG0211">
    <property type="taxonomic scope" value="Bacteria"/>
</dbReference>
<dbReference type="HOGENOM" id="CLU_095424_4_0_10"/>
<dbReference type="OrthoDB" id="9803474at2"/>
<dbReference type="GO" id="GO:1990904">
    <property type="term" value="C:ribonucleoprotein complex"/>
    <property type="evidence" value="ECO:0007669"/>
    <property type="project" value="UniProtKB-KW"/>
</dbReference>
<dbReference type="GO" id="GO:0005840">
    <property type="term" value="C:ribosome"/>
    <property type="evidence" value="ECO:0007669"/>
    <property type="project" value="UniProtKB-KW"/>
</dbReference>
<dbReference type="GO" id="GO:0003735">
    <property type="term" value="F:structural constituent of ribosome"/>
    <property type="evidence" value="ECO:0007669"/>
    <property type="project" value="InterPro"/>
</dbReference>
<dbReference type="GO" id="GO:0006412">
    <property type="term" value="P:translation"/>
    <property type="evidence" value="ECO:0007669"/>
    <property type="project" value="UniProtKB-UniRule"/>
</dbReference>
<dbReference type="FunFam" id="2.40.50.100:FF:000020">
    <property type="entry name" value="50S ribosomal protein L27"/>
    <property type="match status" value="1"/>
</dbReference>
<dbReference type="Gene3D" id="2.40.50.100">
    <property type="match status" value="1"/>
</dbReference>
<dbReference type="HAMAP" id="MF_00539">
    <property type="entry name" value="Ribosomal_bL27"/>
    <property type="match status" value="1"/>
</dbReference>
<dbReference type="InterPro" id="IPR001684">
    <property type="entry name" value="Ribosomal_bL27"/>
</dbReference>
<dbReference type="InterPro" id="IPR018261">
    <property type="entry name" value="Ribosomal_bL27_CS"/>
</dbReference>
<dbReference type="NCBIfam" id="TIGR00062">
    <property type="entry name" value="L27"/>
    <property type="match status" value="1"/>
</dbReference>
<dbReference type="PANTHER" id="PTHR15893:SF0">
    <property type="entry name" value="LARGE RIBOSOMAL SUBUNIT PROTEIN BL27M"/>
    <property type="match status" value="1"/>
</dbReference>
<dbReference type="PANTHER" id="PTHR15893">
    <property type="entry name" value="RIBOSOMAL PROTEIN L27"/>
    <property type="match status" value="1"/>
</dbReference>
<dbReference type="Pfam" id="PF01016">
    <property type="entry name" value="Ribosomal_L27"/>
    <property type="match status" value="1"/>
</dbReference>
<dbReference type="PRINTS" id="PR00063">
    <property type="entry name" value="RIBOSOMALL27"/>
</dbReference>
<dbReference type="SUPFAM" id="SSF110324">
    <property type="entry name" value="Ribosomal L27 protein-like"/>
    <property type="match status" value="1"/>
</dbReference>
<dbReference type="PROSITE" id="PS00831">
    <property type="entry name" value="RIBOSOMAL_L27"/>
    <property type="match status" value="1"/>
</dbReference>
<reference key="1">
    <citation type="submission" date="2008-06" db="EMBL/GenBank/DDBJ databases">
        <title>Complete sequence of Chlorobium phaeobacteroides BS1.</title>
        <authorList>
            <consortium name="US DOE Joint Genome Institute"/>
            <person name="Lucas S."/>
            <person name="Copeland A."/>
            <person name="Lapidus A."/>
            <person name="Glavina del Rio T."/>
            <person name="Dalin E."/>
            <person name="Tice H."/>
            <person name="Bruce D."/>
            <person name="Goodwin L."/>
            <person name="Pitluck S."/>
            <person name="Schmutz J."/>
            <person name="Larimer F."/>
            <person name="Land M."/>
            <person name="Hauser L."/>
            <person name="Kyrpides N."/>
            <person name="Ovchinnikova G."/>
            <person name="Li T."/>
            <person name="Liu Z."/>
            <person name="Zhao F."/>
            <person name="Overmann J."/>
            <person name="Bryant D.A."/>
            <person name="Richardson P."/>
        </authorList>
    </citation>
    <scope>NUCLEOTIDE SEQUENCE [LARGE SCALE GENOMIC DNA]</scope>
    <source>
        <strain>BS1</strain>
    </source>
</reference>
<evidence type="ECO:0000255" key="1">
    <source>
        <dbReference type="HAMAP-Rule" id="MF_00539"/>
    </source>
</evidence>
<evidence type="ECO:0000256" key="2">
    <source>
        <dbReference type="SAM" id="MobiDB-lite"/>
    </source>
</evidence>
<evidence type="ECO:0000305" key="3"/>
<gene>
    <name evidence="1" type="primary">rpmA</name>
    <name type="ordered locus">Cphamn1_0833</name>
</gene>
<accession>B3EP07</accession>
<name>RL27_CHLPB</name>
<organism>
    <name type="scientific">Chlorobium phaeobacteroides (strain BS1)</name>
    <dbReference type="NCBI Taxonomy" id="331678"/>
    <lineage>
        <taxon>Bacteria</taxon>
        <taxon>Pseudomonadati</taxon>
        <taxon>Chlorobiota</taxon>
        <taxon>Chlorobiia</taxon>
        <taxon>Chlorobiales</taxon>
        <taxon>Chlorobiaceae</taxon>
        <taxon>Chlorobium/Pelodictyon group</taxon>
        <taxon>Chlorobium</taxon>
    </lineage>
</organism>
<sequence>MAHKKGGGSTKNGRDSNPKYLGIKASGGSSVSAGSIIVRQRGTVFKPGNNAGIGKDHTIFALVDGNVHFRNTRNDKKLIDILPS</sequence>
<keyword id="KW-0687">Ribonucleoprotein</keyword>
<keyword id="KW-0689">Ribosomal protein</keyword>
<proteinExistence type="inferred from homology"/>
<protein>
    <recommendedName>
        <fullName evidence="1">Large ribosomal subunit protein bL27</fullName>
    </recommendedName>
    <alternativeName>
        <fullName evidence="3">50S ribosomal protein L27</fullName>
    </alternativeName>
</protein>